<proteinExistence type="inferred from homology"/>
<reference key="1">
    <citation type="journal article" date="2009" name="Nature">
        <title>Evolution of pathogenicity and sexual reproduction in eight Candida genomes.</title>
        <authorList>
            <person name="Butler G."/>
            <person name="Rasmussen M.D."/>
            <person name="Lin M.F."/>
            <person name="Santos M.A.S."/>
            <person name="Sakthikumar S."/>
            <person name="Munro C.A."/>
            <person name="Rheinbay E."/>
            <person name="Grabherr M."/>
            <person name="Forche A."/>
            <person name="Reedy J.L."/>
            <person name="Agrafioti I."/>
            <person name="Arnaud M.B."/>
            <person name="Bates S."/>
            <person name="Brown A.J.P."/>
            <person name="Brunke S."/>
            <person name="Costanzo M.C."/>
            <person name="Fitzpatrick D.A."/>
            <person name="de Groot P.W.J."/>
            <person name="Harris D."/>
            <person name="Hoyer L.L."/>
            <person name="Hube B."/>
            <person name="Klis F.M."/>
            <person name="Kodira C."/>
            <person name="Lennard N."/>
            <person name="Logue M.E."/>
            <person name="Martin R."/>
            <person name="Neiman A.M."/>
            <person name="Nikolaou E."/>
            <person name="Quail M.A."/>
            <person name="Quinn J."/>
            <person name="Santos M.C."/>
            <person name="Schmitzberger F.F."/>
            <person name="Sherlock G."/>
            <person name="Shah P."/>
            <person name="Silverstein K.A.T."/>
            <person name="Skrzypek M.S."/>
            <person name="Soll D."/>
            <person name="Staggs R."/>
            <person name="Stansfield I."/>
            <person name="Stumpf M.P.H."/>
            <person name="Sudbery P.E."/>
            <person name="Srikantha T."/>
            <person name="Zeng Q."/>
            <person name="Berman J."/>
            <person name="Berriman M."/>
            <person name="Heitman J."/>
            <person name="Gow N.A.R."/>
            <person name="Lorenz M.C."/>
            <person name="Birren B.W."/>
            <person name="Kellis M."/>
            <person name="Cuomo C.A."/>
        </authorList>
    </citation>
    <scope>NUCLEOTIDE SEQUENCE [LARGE SCALE GENOMIC DNA]</scope>
    <source>
        <strain>ATCC 6260 / CBS 566 / DSM 6381 / JCM 1539 / NBRC 10279 / NRRL Y-324</strain>
    </source>
</reference>
<protein>
    <recommendedName>
        <fullName>Protein LOT5</fullName>
    </recommendedName>
</protein>
<accession>A5DN53</accession>
<sequence>MSNLFMDLRLTHEQPTPENTLPVSEYRAFSPERFSVEDEDKHVVYSGGSGYLVTVMKNDPTTTISINPAIVPIFQEQVDLYVLNSCLLLWSATHKFGVEVPYQKIVLHALQHQQDQDVLYLQLRPGEQLNAKTESDYEPYIEITIKSSEPHSGLAICPPGTDTIPAIYDGMAQCSALHADEDESTEEDNGNELATDIILNQSVSSSADDLDIDLEADSAEHPVVAGMSVDVGYASIAGRRKRDDQDNHPAKRRS</sequence>
<evidence type="ECO:0000250" key="1"/>
<evidence type="ECO:0000305" key="2"/>
<gene>
    <name type="primary">LOT5</name>
    <name type="ORF">PGUG_04704</name>
</gene>
<name>LOT5_PICGU</name>
<dbReference type="EMBL" id="CH408160">
    <property type="protein sequence ID" value="EDK40606.2"/>
    <property type="molecule type" value="Genomic_DNA"/>
</dbReference>
<dbReference type="RefSeq" id="XP_001482749.1">
    <property type="nucleotide sequence ID" value="XM_001482699.1"/>
</dbReference>
<dbReference type="FunCoup" id="A5DN53">
    <property type="interactions" value="43"/>
</dbReference>
<dbReference type="STRING" id="294746.A5DN53"/>
<dbReference type="GeneID" id="5125048"/>
<dbReference type="KEGG" id="pgu:PGUG_04704"/>
<dbReference type="VEuPathDB" id="FungiDB:PGUG_04704"/>
<dbReference type="eggNOG" id="ENOG502RY1I">
    <property type="taxonomic scope" value="Eukaryota"/>
</dbReference>
<dbReference type="HOGENOM" id="CLU_087379_0_0_1"/>
<dbReference type="InParanoid" id="A5DN53"/>
<dbReference type="OMA" id="HEQPNVE"/>
<dbReference type="OrthoDB" id="19714at2759"/>
<dbReference type="Proteomes" id="UP000001997">
    <property type="component" value="Unassembled WGS sequence"/>
</dbReference>
<dbReference type="GO" id="GO:0005829">
    <property type="term" value="C:cytosol"/>
    <property type="evidence" value="ECO:0007669"/>
    <property type="project" value="TreeGrafter"/>
</dbReference>
<dbReference type="GO" id="GO:0034715">
    <property type="term" value="C:pICln-Sm protein complex"/>
    <property type="evidence" value="ECO:0007669"/>
    <property type="project" value="TreeGrafter"/>
</dbReference>
<dbReference type="GO" id="GO:0005681">
    <property type="term" value="C:spliceosomal complex"/>
    <property type="evidence" value="ECO:0007669"/>
    <property type="project" value="TreeGrafter"/>
</dbReference>
<dbReference type="GO" id="GO:0045292">
    <property type="term" value="P:mRNA cis splicing, via spliceosome"/>
    <property type="evidence" value="ECO:0007669"/>
    <property type="project" value="TreeGrafter"/>
</dbReference>
<dbReference type="GO" id="GO:0000387">
    <property type="term" value="P:spliceosomal snRNP assembly"/>
    <property type="evidence" value="ECO:0007669"/>
    <property type="project" value="TreeGrafter"/>
</dbReference>
<dbReference type="Gene3D" id="2.30.29.30">
    <property type="entry name" value="Pleckstrin-homology domain (PH domain)/Phosphotyrosine-binding domain (PTB)"/>
    <property type="match status" value="1"/>
</dbReference>
<dbReference type="InterPro" id="IPR039924">
    <property type="entry name" value="ICln/Lot5/Saf5"/>
</dbReference>
<dbReference type="InterPro" id="IPR011993">
    <property type="entry name" value="PH-like_dom_sf"/>
</dbReference>
<dbReference type="PANTHER" id="PTHR21399">
    <property type="entry name" value="CHLORIDE CONDUCTANCE REGULATORY PROTEIN ICLN"/>
    <property type="match status" value="1"/>
</dbReference>
<dbReference type="PANTHER" id="PTHR21399:SF0">
    <property type="entry name" value="METHYLOSOME SUBUNIT PICLN"/>
    <property type="match status" value="1"/>
</dbReference>
<dbReference type="Pfam" id="PF03517">
    <property type="entry name" value="Voldacs"/>
    <property type="match status" value="1"/>
</dbReference>
<keyword id="KW-0963">Cytoplasm</keyword>
<keyword id="KW-0539">Nucleus</keyword>
<keyword id="KW-1185">Reference proteome</keyword>
<comment type="subcellular location">
    <subcellularLocation>
        <location evidence="1">Cytoplasm</location>
    </subcellularLocation>
    <subcellularLocation>
        <location evidence="1">Nucleus</location>
    </subcellularLocation>
</comment>
<comment type="similarity">
    <text evidence="2">Belongs to the LOT5 family.</text>
</comment>
<feature type="chain" id="PRO_0000324400" description="Protein LOT5">
    <location>
        <begin position="1"/>
        <end position="254"/>
    </location>
</feature>
<organism>
    <name type="scientific">Meyerozyma guilliermondii (strain ATCC 6260 / CBS 566 / DSM 6381 / JCM 1539 / NBRC 10279 / NRRL Y-324)</name>
    <name type="common">Yeast</name>
    <name type="synonym">Candida guilliermondii</name>
    <dbReference type="NCBI Taxonomy" id="294746"/>
    <lineage>
        <taxon>Eukaryota</taxon>
        <taxon>Fungi</taxon>
        <taxon>Dikarya</taxon>
        <taxon>Ascomycota</taxon>
        <taxon>Saccharomycotina</taxon>
        <taxon>Pichiomycetes</taxon>
        <taxon>Debaryomycetaceae</taxon>
        <taxon>Meyerozyma</taxon>
    </lineage>
</organism>